<comment type="function">
    <text evidence="1">Required for maturation of 30S ribosomal subunits.</text>
</comment>
<comment type="subcellular location">
    <subcellularLocation>
        <location evidence="1">Cytoplasm</location>
    </subcellularLocation>
</comment>
<comment type="similarity">
    <text evidence="1">Belongs to the RimP family.</text>
</comment>
<organism>
    <name type="scientific">Orientia tsutsugamushi (strain Ikeda)</name>
    <name type="common">Rickettsia tsutsugamushi</name>
    <dbReference type="NCBI Taxonomy" id="334380"/>
    <lineage>
        <taxon>Bacteria</taxon>
        <taxon>Pseudomonadati</taxon>
        <taxon>Pseudomonadota</taxon>
        <taxon>Alphaproteobacteria</taxon>
        <taxon>Rickettsiales</taxon>
        <taxon>Rickettsiaceae</taxon>
        <taxon>Rickettsieae</taxon>
        <taxon>Orientia</taxon>
    </lineage>
</organism>
<accession>B3CR92</accession>
<feature type="chain" id="PRO_1000149800" description="Ribosome maturation factor RimP">
    <location>
        <begin position="1"/>
        <end position="160"/>
    </location>
</feature>
<protein>
    <recommendedName>
        <fullName evidence="1">Ribosome maturation factor RimP</fullName>
    </recommendedName>
</protein>
<evidence type="ECO:0000255" key="1">
    <source>
        <dbReference type="HAMAP-Rule" id="MF_01077"/>
    </source>
</evidence>
<dbReference type="EMBL" id="AP008981">
    <property type="protein sequence ID" value="BAG40075.1"/>
    <property type="molecule type" value="Genomic_DNA"/>
</dbReference>
<dbReference type="RefSeq" id="WP_012461262.1">
    <property type="nucleotide sequence ID" value="NC_010793.1"/>
</dbReference>
<dbReference type="SMR" id="B3CR92"/>
<dbReference type="KEGG" id="ott:OTT_0617"/>
<dbReference type="HOGENOM" id="CLU_070525_2_1_5"/>
<dbReference type="OrthoDB" id="9805006at2"/>
<dbReference type="Proteomes" id="UP000001033">
    <property type="component" value="Chromosome"/>
</dbReference>
<dbReference type="GO" id="GO:0005829">
    <property type="term" value="C:cytosol"/>
    <property type="evidence" value="ECO:0007669"/>
    <property type="project" value="TreeGrafter"/>
</dbReference>
<dbReference type="GO" id="GO:0000028">
    <property type="term" value="P:ribosomal small subunit assembly"/>
    <property type="evidence" value="ECO:0007669"/>
    <property type="project" value="TreeGrafter"/>
</dbReference>
<dbReference type="GO" id="GO:0006412">
    <property type="term" value="P:translation"/>
    <property type="evidence" value="ECO:0007669"/>
    <property type="project" value="TreeGrafter"/>
</dbReference>
<dbReference type="CDD" id="cd01734">
    <property type="entry name" value="YlxS_C"/>
    <property type="match status" value="1"/>
</dbReference>
<dbReference type="FunFam" id="3.30.300.70:FF:000001">
    <property type="entry name" value="Ribosome maturation factor RimP"/>
    <property type="match status" value="1"/>
</dbReference>
<dbReference type="Gene3D" id="2.30.30.180">
    <property type="entry name" value="Ribosome maturation factor RimP, C-terminal domain"/>
    <property type="match status" value="1"/>
</dbReference>
<dbReference type="Gene3D" id="3.30.300.70">
    <property type="entry name" value="RimP-like superfamily, N-terminal"/>
    <property type="match status" value="1"/>
</dbReference>
<dbReference type="HAMAP" id="MF_01077">
    <property type="entry name" value="RimP"/>
    <property type="match status" value="1"/>
</dbReference>
<dbReference type="InterPro" id="IPR003728">
    <property type="entry name" value="Ribosome_maturation_RimP"/>
</dbReference>
<dbReference type="InterPro" id="IPR028998">
    <property type="entry name" value="RimP_C"/>
</dbReference>
<dbReference type="InterPro" id="IPR036847">
    <property type="entry name" value="RimP_C_sf"/>
</dbReference>
<dbReference type="InterPro" id="IPR028989">
    <property type="entry name" value="RimP_N"/>
</dbReference>
<dbReference type="InterPro" id="IPR035956">
    <property type="entry name" value="RimP_N_sf"/>
</dbReference>
<dbReference type="PANTHER" id="PTHR33867">
    <property type="entry name" value="RIBOSOME MATURATION FACTOR RIMP"/>
    <property type="match status" value="1"/>
</dbReference>
<dbReference type="PANTHER" id="PTHR33867:SF1">
    <property type="entry name" value="RIBOSOME MATURATION FACTOR RIMP"/>
    <property type="match status" value="1"/>
</dbReference>
<dbReference type="Pfam" id="PF17384">
    <property type="entry name" value="DUF150_C"/>
    <property type="match status" value="1"/>
</dbReference>
<dbReference type="Pfam" id="PF02576">
    <property type="entry name" value="RimP_N"/>
    <property type="match status" value="1"/>
</dbReference>
<dbReference type="SUPFAM" id="SSF74942">
    <property type="entry name" value="YhbC-like, C-terminal domain"/>
    <property type="match status" value="1"/>
</dbReference>
<dbReference type="SUPFAM" id="SSF75420">
    <property type="entry name" value="YhbC-like, N-terminal domain"/>
    <property type="match status" value="1"/>
</dbReference>
<name>RIMP_ORITI</name>
<keyword id="KW-0963">Cytoplasm</keyword>
<keyword id="KW-0690">Ribosome biogenesis</keyword>
<gene>
    <name evidence="1" type="primary">rimP</name>
    <name type="ordered locus">OTT_0617</name>
</gene>
<sequence>MLNDKIKELITPTAKALGYKVINVNFVVKPAILKIVIDRFDEKKVKVLDCQAFSKAISAVLDVENIIPGKYFLEVESAGIERSLMDLEDFIKFLGYTIQVKLVAAINENKKYIGVISNIKGQEITLNLQNDSTIAIDYDNIKVAKIVFTDEMFRQITKNY</sequence>
<proteinExistence type="inferred from homology"/>
<reference key="1">
    <citation type="journal article" date="2008" name="DNA Res.">
        <title>The whole-genome sequencing of the obligate intracellular bacterium Orientia tsutsugamushi revealed massive gene amplification during reductive genome evolution.</title>
        <authorList>
            <person name="Nakayama K."/>
            <person name="Yamashita A."/>
            <person name="Kurokawa K."/>
            <person name="Morimoto T."/>
            <person name="Ogawa M."/>
            <person name="Fukuhara M."/>
            <person name="Urakami H."/>
            <person name="Ohnishi M."/>
            <person name="Uchiyama I."/>
            <person name="Ogura Y."/>
            <person name="Ooka T."/>
            <person name="Oshima K."/>
            <person name="Tamura A."/>
            <person name="Hattori M."/>
            <person name="Hayashi T."/>
        </authorList>
    </citation>
    <scope>NUCLEOTIDE SEQUENCE [LARGE SCALE GENOMIC DNA]</scope>
    <source>
        <strain>Ikeda</strain>
    </source>
</reference>